<comment type="function">
    <text evidence="6">Odorant receptor.</text>
</comment>
<comment type="subcellular location">
    <subcellularLocation>
        <location>Cell membrane</location>
        <topology>Multi-pass membrane protein</topology>
    </subcellularLocation>
</comment>
<comment type="similarity">
    <text evidence="2">Belongs to the G-protein coupled receptor 1 family.</text>
</comment>
<comment type="online information" name="Human Olfactory Receptor Data Exploratorium (HORDE)">
    <link uri="http://genome.weizmann.ac.il/horde/card/index/symbol:OR2T11"/>
</comment>
<name>O2T11_HUMAN</name>
<sequence>MTNTSSSDFTLLGLLVNSEAAGIVFTVILAVFLGAVTANLVMIFLIQVDSRLHTPMYFLLSQLSIMDTLFICTTVPKLLADMVSKEKIISFVACGIQIFLYLTMIGSEFFLLGLMAYDCYVAVCNPLRYPVLMNRKKCLLLAAGAWFGGSLDGFLLTPITMNVPYCGSRSINHFFCEIPAVLKLACADTSLYETLMYICCVLMLLIPISIISTSYSLILLTIHRMPSAEGRKKAFTTCSSHLTVVSIFYGAAFYTYVLPQSFHTPEQDKVVSAFYTIVTPMLNPLIYSLRNKDVIGAFKKVFACCSSAQKVATSDA</sequence>
<dbReference type="EMBL" id="AB065614">
    <property type="protein sequence ID" value="BAC05841.1"/>
    <property type="molecule type" value="Genomic_DNA"/>
</dbReference>
<dbReference type="EMBL" id="KP290143">
    <property type="protein sequence ID" value="ALI87331.1"/>
    <property type="molecule type" value="Genomic_DNA"/>
</dbReference>
<dbReference type="EMBL" id="KP290144">
    <property type="protein sequence ID" value="ALI87332.1"/>
    <property type="molecule type" value="Genomic_DNA"/>
</dbReference>
<dbReference type="EMBL" id="CH471257">
    <property type="protein sequence ID" value="EAW57529.1"/>
    <property type="molecule type" value="Genomic_DNA"/>
</dbReference>
<dbReference type="EMBL" id="BC140749">
    <property type="protein sequence ID" value="AAI40750.1"/>
    <property type="molecule type" value="mRNA"/>
</dbReference>
<dbReference type="EMBL" id="BK004476">
    <property type="protein sequence ID" value="DAA04874.1"/>
    <property type="molecule type" value="Genomic_DNA"/>
</dbReference>
<dbReference type="RefSeq" id="NP_001001964.1">
    <property type="nucleotide sequence ID" value="NM_001001964.2"/>
</dbReference>
<dbReference type="SMR" id="Q8NH01"/>
<dbReference type="BioGRID" id="126039">
    <property type="interactions" value="1"/>
</dbReference>
<dbReference type="FunCoup" id="Q8NH01">
    <property type="interactions" value="456"/>
</dbReference>
<dbReference type="IntAct" id="Q8NH01">
    <property type="interactions" value="1"/>
</dbReference>
<dbReference type="STRING" id="9606.ENSP00000492951"/>
<dbReference type="GlyCosmos" id="Q8NH01">
    <property type="glycosylation" value="1 site, No reported glycans"/>
</dbReference>
<dbReference type="GlyGen" id="Q8NH01">
    <property type="glycosylation" value="1 site"/>
</dbReference>
<dbReference type="BioMuta" id="OR2T11"/>
<dbReference type="DMDM" id="38503049"/>
<dbReference type="MassIVE" id="Q8NH01"/>
<dbReference type="PaxDb" id="9606-ENSP00000328934"/>
<dbReference type="PeptideAtlas" id="Q8NH01"/>
<dbReference type="ProteomicsDB" id="73637"/>
<dbReference type="Antibodypedia" id="79204">
    <property type="antibodies" value="102 antibodies from 23 providers"/>
</dbReference>
<dbReference type="DNASU" id="127077"/>
<dbReference type="Ensembl" id="ENST00000641193.1">
    <property type="protein sequence ID" value="ENSP00000492951.1"/>
    <property type="gene ID" value="ENSG00000279301.5"/>
</dbReference>
<dbReference type="GeneID" id="127077"/>
<dbReference type="KEGG" id="hsa:127077"/>
<dbReference type="MANE-Select" id="ENST00000641193.1">
    <property type="protein sequence ID" value="ENSP00000492951.1"/>
    <property type="RefSeq nucleotide sequence ID" value="NM_001001964.2"/>
    <property type="RefSeq protein sequence ID" value="NP_001001964.1"/>
</dbReference>
<dbReference type="UCSC" id="uc001ier.1">
    <property type="organism name" value="human"/>
</dbReference>
<dbReference type="AGR" id="HGNC:19574"/>
<dbReference type="CTD" id="127077"/>
<dbReference type="GeneCards" id="OR2T11"/>
<dbReference type="HGNC" id="HGNC:19574">
    <property type="gene designation" value="OR2T11"/>
</dbReference>
<dbReference type="HPA" id="ENSG00000279301">
    <property type="expression patterns" value="Not detected"/>
</dbReference>
<dbReference type="neXtProt" id="NX_Q8NH01"/>
<dbReference type="PharmGKB" id="PA134948800"/>
<dbReference type="VEuPathDB" id="HostDB:ENSG00000279301"/>
<dbReference type="eggNOG" id="ENOG502SMQD">
    <property type="taxonomic scope" value="Eukaryota"/>
</dbReference>
<dbReference type="GeneTree" id="ENSGT01130000278260"/>
<dbReference type="HOGENOM" id="CLU_012526_1_2_1"/>
<dbReference type="InParanoid" id="Q8NH01"/>
<dbReference type="OMA" id="FLIHMDS"/>
<dbReference type="PAN-GO" id="Q8NH01">
    <property type="GO annotations" value="0 GO annotations based on evolutionary models"/>
</dbReference>
<dbReference type="PhylomeDB" id="Q8NH01"/>
<dbReference type="TreeFam" id="TF337295"/>
<dbReference type="PathwayCommons" id="Q8NH01"/>
<dbReference type="Reactome" id="R-HSA-9752946">
    <property type="pathway name" value="Expression and translocation of olfactory receptors"/>
</dbReference>
<dbReference type="SignaLink" id="Q8NH01"/>
<dbReference type="BioGRID-ORCS" id="127077">
    <property type="hits" value="11 hits in 738 CRISPR screens"/>
</dbReference>
<dbReference type="GeneWiki" id="OR2T11"/>
<dbReference type="GenomeRNAi" id="127077"/>
<dbReference type="Pharos" id="Q8NH01">
    <property type="development level" value="Tdark"/>
</dbReference>
<dbReference type="PRO" id="PR:Q8NH01"/>
<dbReference type="Proteomes" id="UP000005640">
    <property type="component" value="Chromosome 1"/>
</dbReference>
<dbReference type="RNAct" id="Q8NH01">
    <property type="molecule type" value="protein"/>
</dbReference>
<dbReference type="Bgee" id="ENSG00000279301">
    <property type="expression patterns" value="Expressed in kidney and 2 other cell types or tissues"/>
</dbReference>
<dbReference type="GO" id="GO:0005886">
    <property type="term" value="C:plasma membrane"/>
    <property type="evidence" value="ECO:0000318"/>
    <property type="project" value="GO_Central"/>
</dbReference>
<dbReference type="GO" id="GO:0004930">
    <property type="term" value="F:G protein-coupled receptor activity"/>
    <property type="evidence" value="ECO:0007669"/>
    <property type="project" value="UniProtKB-KW"/>
</dbReference>
<dbReference type="GO" id="GO:0004984">
    <property type="term" value="F:olfactory receptor activity"/>
    <property type="evidence" value="ECO:0000318"/>
    <property type="project" value="GO_Central"/>
</dbReference>
<dbReference type="GO" id="GO:0050911">
    <property type="term" value="P:detection of chemical stimulus involved in sensory perception of smell"/>
    <property type="evidence" value="ECO:0000318"/>
    <property type="project" value="GO_Central"/>
</dbReference>
<dbReference type="CDD" id="cd15421">
    <property type="entry name" value="7tmA_OR2T-like"/>
    <property type="match status" value="1"/>
</dbReference>
<dbReference type="FunFam" id="1.20.1070.10:FF:000008">
    <property type="entry name" value="Olfactory receptor"/>
    <property type="match status" value="1"/>
</dbReference>
<dbReference type="Gene3D" id="1.20.1070.10">
    <property type="entry name" value="Rhodopsin 7-helix transmembrane proteins"/>
    <property type="match status" value="1"/>
</dbReference>
<dbReference type="InterPro" id="IPR000276">
    <property type="entry name" value="GPCR_Rhodpsn"/>
</dbReference>
<dbReference type="InterPro" id="IPR017452">
    <property type="entry name" value="GPCR_Rhodpsn_7TM"/>
</dbReference>
<dbReference type="InterPro" id="IPR000725">
    <property type="entry name" value="Olfact_rcpt"/>
</dbReference>
<dbReference type="PANTHER" id="PTHR26453">
    <property type="entry name" value="OLFACTORY RECEPTOR"/>
    <property type="match status" value="1"/>
</dbReference>
<dbReference type="Pfam" id="PF13853">
    <property type="entry name" value="7tm_4"/>
    <property type="match status" value="1"/>
</dbReference>
<dbReference type="PRINTS" id="PR00237">
    <property type="entry name" value="GPCRRHODOPSN"/>
</dbReference>
<dbReference type="PRINTS" id="PR00245">
    <property type="entry name" value="OLFACTORYR"/>
</dbReference>
<dbReference type="SUPFAM" id="SSF81321">
    <property type="entry name" value="Family A G protein-coupled receptor-like"/>
    <property type="match status" value="1"/>
</dbReference>
<dbReference type="PROSITE" id="PS50262">
    <property type="entry name" value="G_PROTEIN_RECEP_F1_2"/>
    <property type="match status" value="1"/>
</dbReference>
<proteinExistence type="evidence at transcript level"/>
<organism>
    <name type="scientific">Homo sapiens</name>
    <name type="common">Human</name>
    <dbReference type="NCBI Taxonomy" id="9606"/>
    <lineage>
        <taxon>Eukaryota</taxon>
        <taxon>Metazoa</taxon>
        <taxon>Chordata</taxon>
        <taxon>Craniata</taxon>
        <taxon>Vertebrata</taxon>
        <taxon>Euteleostomi</taxon>
        <taxon>Mammalia</taxon>
        <taxon>Eutheria</taxon>
        <taxon>Euarchontoglires</taxon>
        <taxon>Primates</taxon>
        <taxon>Haplorrhini</taxon>
        <taxon>Catarrhini</taxon>
        <taxon>Hominidae</taxon>
        <taxon>Homo</taxon>
    </lineage>
</organism>
<evidence type="ECO:0000255" key="1"/>
<evidence type="ECO:0000255" key="2">
    <source>
        <dbReference type="PROSITE-ProRule" id="PRU00521"/>
    </source>
</evidence>
<evidence type="ECO:0000269" key="3">
    <source>
    </source>
</evidence>
<evidence type="ECO:0000269" key="4">
    <source>
    </source>
</evidence>
<evidence type="ECO:0000269" key="5">
    <source ref="3"/>
</evidence>
<evidence type="ECO:0000305" key="6"/>
<keyword id="KW-1003">Cell membrane</keyword>
<keyword id="KW-1015">Disulfide bond</keyword>
<keyword id="KW-0297">G-protein coupled receptor</keyword>
<keyword id="KW-0325">Glycoprotein</keyword>
<keyword id="KW-0472">Membrane</keyword>
<keyword id="KW-0552">Olfaction</keyword>
<keyword id="KW-0675">Receptor</keyword>
<keyword id="KW-1185">Reference proteome</keyword>
<keyword id="KW-0716">Sensory transduction</keyword>
<keyword id="KW-0807">Transducer</keyword>
<keyword id="KW-0812">Transmembrane</keyword>
<keyword id="KW-1133">Transmembrane helix</keyword>
<feature type="chain" id="PRO_0000150503" description="Olfactory receptor 2T11">
    <location>
        <begin position="1"/>
        <end position="316"/>
    </location>
</feature>
<feature type="topological domain" description="Extracellular" evidence="1">
    <location>
        <begin position="1"/>
        <end position="22"/>
    </location>
</feature>
<feature type="transmembrane region" description="Helical; Name=1" evidence="1">
    <location>
        <begin position="23"/>
        <end position="46"/>
    </location>
</feature>
<feature type="topological domain" description="Cytoplasmic" evidence="1">
    <location>
        <begin position="47"/>
        <end position="54"/>
    </location>
</feature>
<feature type="transmembrane region" description="Helical; Name=2" evidence="1">
    <location>
        <begin position="55"/>
        <end position="76"/>
    </location>
</feature>
<feature type="topological domain" description="Extracellular" evidence="1">
    <location>
        <begin position="77"/>
        <end position="97"/>
    </location>
</feature>
<feature type="transmembrane region" description="Helical; Name=3" evidence="1">
    <location>
        <begin position="98"/>
        <end position="117"/>
    </location>
</feature>
<feature type="topological domain" description="Cytoplasmic" evidence="1">
    <location>
        <begin position="118"/>
        <end position="136"/>
    </location>
</feature>
<feature type="transmembrane region" description="Helical; Name=4" evidence="1">
    <location>
        <begin position="137"/>
        <end position="155"/>
    </location>
</feature>
<feature type="topological domain" description="Extracellular" evidence="1">
    <location>
        <begin position="156"/>
        <end position="192"/>
    </location>
</feature>
<feature type="transmembrane region" description="Helical; Name=5" evidence="1">
    <location>
        <begin position="193"/>
        <end position="216"/>
    </location>
</feature>
<feature type="topological domain" description="Cytoplasmic" evidence="1">
    <location>
        <begin position="217"/>
        <end position="233"/>
    </location>
</feature>
<feature type="transmembrane region" description="Helical; Name=6" evidence="1">
    <location>
        <begin position="234"/>
        <end position="256"/>
    </location>
</feature>
<feature type="topological domain" description="Extracellular" evidence="1">
    <location>
        <begin position="257"/>
        <end position="269"/>
    </location>
</feature>
<feature type="transmembrane region" description="Helical; Name=7" evidence="1">
    <location>
        <begin position="270"/>
        <end position="289"/>
    </location>
</feature>
<feature type="topological domain" description="Cytoplasmic" evidence="1">
    <location>
        <begin position="290"/>
        <end position="316"/>
    </location>
</feature>
<feature type="glycosylation site" description="N-linked (GlcNAc...) asparagine" evidence="1">
    <location>
        <position position="3"/>
    </location>
</feature>
<feature type="disulfide bond" evidence="2">
    <location>
        <begin position="94"/>
        <end position="186"/>
    </location>
</feature>
<feature type="sequence variant" id="VAR_053155" description="In dbSNP:rs1892443." evidence="3 4 5">
    <original>C</original>
    <variation>R</variation>
    <location>
        <position position="119"/>
    </location>
</feature>
<feature type="sequence variant" id="VAR_053156" description="In dbSNP:rs1892442." evidence="3 4 5">
    <original>Q</original>
    <variation>R</variation>
    <location>
        <position position="309"/>
    </location>
</feature>
<accession>Q8NH01</accession>
<accession>B9EIN4</accession>
<accession>Q6IEY6</accession>
<gene>
    <name type="primary">OR2T11</name>
</gene>
<reference key="1">
    <citation type="submission" date="2001-07" db="EMBL/GenBank/DDBJ databases">
        <title>Genome-wide discovery and analysis of human seven transmembrane helix receptor genes.</title>
        <authorList>
            <person name="Suwa M."/>
            <person name="Sato T."/>
            <person name="Okouchi I."/>
            <person name="Arita M."/>
            <person name="Futami K."/>
            <person name="Matsumoto S."/>
            <person name="Tsutsumi S."/>
            <person name="Aburatani H."/>
            <person name="Asai K."/>
            <person name="Akiyama Y."/>
        </authorList>
    </citation>
    <scope>NUCLEOTIDE SEQUENCE [GENOMIC DNA]</scope>
</reference>
<reference key="2">
    <citation type="journal article" date="2015" name="Sci. Data">
        <title>Human olfactory receptor responses to odorants.</title>
        <authorList>
            <person name="Mainland J.D."/>
            <person name="Li Y.R."/>
            <person name="Zhou T."/>
            <person name="Liu W.L."/>
            <person name="Matsunami H."/>
        </authorList>
    </citation>
    <scope>NUCLEOTIDE SEQUENCE [GENOMIC DNA]</scope>
    <scope>VARIANTS ARG-119 AND ARG-309</scope>
</reference>
<reference key="3">
    <citation type="submission" date="2005-09" db="EMBL/GenBank/DDBJ databases">
        <authorList>
            <person name="Mural R.J."/>
            <person name="Istrail S."/>
            <person name="Sutton G.G."/>
            <person name="Florea L."/>
            <person name="Halpern A.L."/>
            <person name="Mobarry C.M."/>
            <person name="Lippert R."/>
            <person name="Walenz B."/>
            <person name="Shatkay H."/>
            <person name="Dew I."/>
            <person name="Miller J.R."/>
            <person name="Flanigan M.J."/>
            <person name="Edwards N.J."/>
            <person name="Bolanos R."/>
            <person name="Fasulo D."/>
            <person name="Halldorsson B.V."/>
            <person name="Hannenhalli S."/>
            <person name="Turner R."/>
            <person name="Yooseph S."/>
            <person name="Lu F."/>
            <person name="Nusskern D.R."/>
            <person name="Shue B.C."/>
            <person name="Zheng X.H."/>
            <person name="Zhong F."/>
            <person name="Delcher A.L."/>
            <person name="Huson D.H."/>
            <person name="Kravitz S.A."/>
            <person name="Mouchard L."/>
            <person name="Reinert K."/>
            <person name="Remington K.A."/>
            <person name="Clark A.G."/>
            <person name="Waterman M.S."/>
            <person name="Eichler E.E."/>
            <person name="Adams M.D."/>
            <person name="Hunkapiller M.W."/>
            <person name="Myers E.W."/>
            <person name="Venter J.C."/>
        </authorList>
    </citation>
    <scope>NUCLEOTIDE SEQUENCE [LARGE SCALE GENOMIC DNA]</scope>
    <scope>VARIANTS ARG-119 AND ARG-309</scope>
</reference>
<reference key="4">
    <citation type="journal article" date="2004" name="Genome Res.">
        <title>The status, quality, and expansion of the NIH full-length cDNA project: the Mammalian Gene Collection (MGC).</title>
        <authorList>
            <consortium name="The MGC Project Team"/>
        </authorList>
    </citation>
    <scope>NUCLEOTIDE SEQUENCE [LARGE SCALE MRNA]</scope>
    <scope>VARIANTS ARG-119 AND ARG-309</scope>
</reference>
<reference key="5">
    <citation type="journal article" date="2004" name="Proc. Natl. Acad. Sci. U.S.A.">
        <title>The human olfactory receptor gene family.</title>
        <authorList>
            <person name="Malnic B."/>
            <person name="Godfrey P.A."/>
            <person name="Buck L.B."/>
        </authorList>
    </citation>
    <scope>IDENTIFICATION</scope>
</reference>
<reference key="6">
    <citation type="journal article" date="2004" name="Proc. Natl. Acad. Sci. U.S.A.">
        <authorList>
            <person name="Malnic B."/>
            <person name="Godfrey P.A."/>
            <person name="Buck L.B."/>
        </authorList>
    </citation>
    <scope>ERRATUM OF PUBMED:14983052</scope>
</reference>
<protein>
    <recommendedName>
        <fullName>Olfactory receptor 2T11</fullName>
    </recommendedName>
    <alternativeName>
        <fullName>Olfactory receptor OR1-65</fullName>
    </alternativeName>
</protein>